<gene>
    <name type="primary">CYP71C3</name>
    <name type="synonym">BX5</name>
</gene>
<proteinExistence type="evidence at transcript level"/>
<feature type="chain" id="PRO_0000052115" description="Cytochrome P450 71C3">
    <location>
        <begin position="1"/>
        <end position="535"/>
    </location>
</feature>
<feature type="transmembrane region" description="Helical" evidence="2">
    <location>
        <begin position="23"/>
        <end position="43"/>
    </location>
</feature>
<feature type="binding site" description="axial binding residue" evidence="1">
    <location>
        <position position="475"/>
    </location>
    <ligand>
        <name>heme</name>
        <dbReference type="ChEBI" id="CHEBI:30413"/>
    </ligand>
    <ligandPart>
        <name>Fe</name>
        <dbReference type="ChEBI" id="CHEBI:18248"/>
    </ligandPart>
</feature>
<sequence length="535" mass="60716">MALQAAYEYLQQAVGHGAWSSTQTLTLLLIAVPTVLLLLASLAKSTSSSGRGKPPLPPSPPGTLPIVGHLHHIGPQTHISLQELVAKYGHNGFLFLRAGAVPTLIVSSPSAAEAVMRTHDHICASRPWSMASHILRYNTCDVAFSPLGEYWQQTRKLMNTHLLSNKKVYSFRHGREEEVCLVVDNLREAAAKSPSTAVDMSEVLAAYTNDVVSRSVLGSTHRKKGRNTLFREMTMTNVDLLVGFNLEYYIPRWPLTDLLFRLVCWKVTRHLKRWDALLEEVIHEHVEMRKLSGDKEKESDDFIDIFLSRYEEYGFTMDNVKSLLMNVFEAAIETSYLVLESAMAELMNHRRVMKKLQAEVRAYGAEKKLDMIREDDLSSLPYLKASMKEALRLHPPGPLLLPHYSTADCQIDGYHIPANPRVLVNGWAIGRDPAVWEKPEEFMPERFMRDGWDKSNSYSGQDFRYLPFGSGRRICPGANFGLATMEIMLANLMYHFDWEVPNEKEDGCWKVSMDEKFGLMLRRNELLYLVPRASS</sequence>
<dbReference type="EC" id="1.14.-.-"/>
<dbReference type="EMBL" id="X81830">
    <property type="protein sequence ID" value="CAA57424.2"/>
    <property type="molecule type" value="mRNA"/>
</dbReference>
<dbReference type="EMBL" id="Y11403">
    <property type="protein sequence ID" value="CAA72207.1"/>
    <property type="molecule type" value="Genomic_DNA"/>
</dbReference>
<dbReference type="PIR" id="T03246">
    <property type="entry name" value="T03246"/>
</dbReference>
<dbReference type="PIR" id="T03260">
    <property type="entry name" value="T03260"/>
</dbReference>
<dbReference type="SMR" id="P93703"/>
<dbReference type="STRING" id="4577.P93703"/>
<dbReference type="PaxDb" id="4577-GRMZM2G063756_P01"/>
<dbReference type="KEGG" id="ag:CAA72207"/>
<dbReference type="MaizeGDB" id="299157"/>
<dbReference type="eggNOG" id="KOG0156">
    <property type="taxonomic scope" value="Eukaryota"/>
</dbReference>
<dbReference type="InParanoid" id="P93703"/>
<dbReference type="BioCyc" id="MetaCyc:MONOMER-10172"/>
<dbReference type="UniPathway" id="UPA00872">
    <property type="reaction ID" value="UER00851"/>
</dbReference>
<dbReference type="Proteomes" id="UP000007305">
    <property type="component" value="Unplaced"/>
</dbReference>
<dbReference type="ExpressionAtlas" id="P93703">
    <property type="expression patterns" value="baseline and differential"/>
</dbReference>
<dbReference type="GO" id="GO:0016020">
    <property type="term" value="C:membrane"/>
    <property type="evidence" value="ECO:0000318"/>
    <property type="project" value="GO_Central"/>
</dbReference>
<dbReference type="GO" id="GO:0020037">
    <property type="term" value="F:heme binding"/>
    <property type="evidence" value="ECO:0007669"/>
    <property type="project" value="InterPro"/>
</dbReference>
<dbReference type="GO" id="GO:0005506">
    <property type="term" value="F:iron ion binding"/>
    <property type="evidence" value="ECO:0007669"/>
    <property type="project" value="InterPro"/>
</dbReference>
<dbReference type="GO" id="GO:0016709">
    <property type="term" value="F:oxidoreductase activity, acting on paired donors, with incorporation or reduction of molecular oxygen, NAD(P)H as one donor, and incorporation of one atom of oxygen"/>
    <property type="evidence" value="ECO:0000318"/>
    <property type="project" value="GO_Central"/>
</dbReference>
<dbReference type="CDD" id="cd11072">
    <property type="entry name" value="CYP71-like"/>
    <property type="match status" value="1"/>
</dbReference>
<dbReference type="FunFam" id="1.10.630.10:FF:000055">
    <property type="entry name" value="Cytochrome P450 71A26"/>
    <property type="match status" value="1"/>
</dbReference>
<dbReference type="Gene3D" id="1.10.630.10">
    <property type="entry name" value="Cytochrome P450"/>
    <property type="match status" value="1"/>
</dbReference>
<dbReference type="InterPro" id="IPR001128">
    <property type="entry name" value="Cyt_P450"/>
</dbReference>
<dbReference type="InterPro" id="IPR017972">
    <property type="entry name" value="Cyt_P450_CS"/>
</dbReference>
<dbReference type="InterPro" id="IPR002401">
    <property type="entry name" value="Cyt_P450_E_grp-I"/>
</dbReference>
<dbReference type="InterPro" id="IPR036396">
    <property type="entry name" value="Cyt_P450_sf"/>
</dbReference>
<dbReference type="PANTHER" id="PTHR47955">
    <property type="entry name" value="CYTOCHROME P450 FAMILY 71 PROTEIN"/>
    <property type="match status" value="1"/>
</dbReference>
<dbReference type="PANTHER" id="PTHR47955:SF14">
    <property type="entry name" value="OS01G0543600 PROTEIN"/>
    <property type="match status" value="1"/>
</dbReference>
<dbReference type="Pfam" id="PF00067">
    <property type="entry name" value="p450"/>
    <property type="match status" value="1"/>
</dbReference>
<dbReference type="PRINTS" id="PR00463">
    <property type="entry name" value="EP450I"/>
</dbReference>
<dbReference type="SUPFAM" id="SSF48264">
    <property type="entry name" value="Cytochrome P450"/>
    <property type="match status" value="1"/>
</dbReference>
<dbReference type="PROSITE" id="PS00086">
    <property type="entry name" value="CYTOCHROME_P450"/>
    <property type="match status" value="1"/>
</dbReference>
<organism>
    <name type="scientific">Zea mays</name>
    <name type="common">Maize</name>
    <dbReference type="NCBI Taxonomy" id="4577"/>
    <lineage>
        <taxon>Eukaryota</taxon>
        <taxon>Viridiplantae</taxon>
        <taxon>Streptophyta</taxon>
        <taxon>Embryophyta</taxon>
        <taxon>Tracheophyta</taxon>
        <taxon>Spermatophyta</taxon>
        <taxon>Magnoliopsida</taxon>
        <taxon>Liliopsida</taxon>
        <taxon>Poales</taxon>
        <taxon>Poaceae</taxon>
        <taxon>PACMAD clade</taxon>
        <taxon>Panicoideae</taxon>
        <taxon>Andropogonodae</taxon>
        <taxon>Andropogoneae</taxon>
        <taxon>Tripsacinae</taxon>
        <taxon>Zea</taxon>
    </lineage>
</organism>
<reference key="1">
    <citation type="journal article" date="1995" name="Mol. Gen. Genet.">
        <title>Expression of a cytochrome P450 gene family in maize.</title>
        <authorList>
            <person name="Frey M."/>
            <person name="Kliem R."/>
            <person name="Saedler H."/>
            <person name="Gierl A."/>
        </authorList>
    </citation>
    <scope>NUCLEOTIDE SEQUENCE [MRNA] OF 2-535</scope>
    <source>
        <strain>cv. CI31A</strain>
    </source>
</reference>
<reference key="2">
    <citation type="journal article" date="1997" name="Science">
        <title>Analysis of a chemical plant defense mechanism in grasses.</title>
        <authorList>
            <person name="Frey M."/>
            <person name="Chomet P."/>
            <person name="Glawischnig E."/>
            <person name="Stettner C."/>
            <person name="Grun S."/>
            <person name="Winklmair A."/>
            <person name="Eisenreich W."/>
            <person name="Bacher A."/>
            <person name="Meeley R.B."/>
            <person name="Briggs S.P."/>
            <person name="Simcox K."/>
            <person name="Gierl A."/>
        </authorList>
    </citation>
    <scope>NUCLEOTIDE SEQUENCE [GENOMIC DNA]</scope>
    <source>
        <strain>cv. CI31A</strain>
    </source>
</reference>
<name>C71C3_MAIZE</name>
<accession>P93703</accession>
<accession>Q43256</accession>
<keyword id="KW-0349">Heme</keyword>
<keyword id="KW-0408">Iron</keyword>
<keyword id="KW-0472">Membrane</keyword>
<keyword id="KW-0479">Metal-binding</keyword>
<keyword id="KW-0503">Monooxygenase</keyword>
<keyword id="KW-0560">Oxidoreductase</keyword>
<keyword id="KW-1185">Reference proteome</keyword>
<keyword id="KW-0812">Transmembrane</keyword>
<keyword id="KW-1133">Transmembrane helix</keyword>
<evidence type="ECO:0000250" key="1"/>
<evidence type="ECO:0000255" key="2"/>
<evidence type="ECO:0000305" key="3"/>
<protein>
    <recommendedName>
        <fullName>Cytochrome P450 71C3</fullName>
        <ecNumber>1.14.-.-</ecNumber>
    </recommendedName>
    <alternativeName>
        <fullName>Protein benzoxazineless 5</fullName>
    </alternativeName>
</protein>
<comment type="function">
    <text>Catalyzes the conversion of 2-hydroxy-1,4-benzoxazin-3-one (HBOA) to 2,4-dihydroxy-1,4-benzoxazin-3-one (DIBOA).</text>
</comment>
<comment type="cofactor">
    <cofactor evidence="1">
        <name>heme</name>
        <dbReference type="ChEBI" id="CHEBI:30413"/>
    </cofactor>
</comment>
<comment type="pathway">
    <text>Secondary metabolite biosynthesis; 2,4-dihydroxy-1,4-benzoxazin-3-one biosynthesis; 2,4-dihydroxy-1,4-benzoxazin-3-one from indoleglycerol phosphate: step 5/5.</text>
</comment>
<comment type="subcellular location">
    <subcellularLocation>
        <location evidence="3">Membrane</location>
        <topology evidence="3">Single-pass membrane protein</topology>
    </subcellularLocation>
</comment>
<comment type="similarity">
    <text evidence="3">Belongs to the cytochrome P450 family.</text>
</comment>